<name>PSRP_BURM7</name>
<organism>
    <name type="scientific">Burkholderia mallei (strain NCTC 10247)</name>
    <dbReference type="NCBI Taxonomy" id="320389"/>
    <lineage>
        <taxon>Bacteria</taxon>
        <taxon>Pseudomonadati</taxon>
        <taxon>Pseudomonadota</taxon>
        <taxon>Betaproteobacteria</taxon>
        <taxon>Burkholderiales</taxon>
        <taxon>Burkholderiaceae</taxon>
        <taxon>Burkholderia</taxon>
        <taxon>pseudomallei group</taxon>
    </lineage>
</organism>
<feature type="chain" id="PRO_0000316648" description="Putative phosphoenolpyruvate synthase regulatory protein">
    <location>
        <begin position="1"/>
        <end position="271"/>
    </location>
</feature>
<feature type="binding site" evidence="1">
    <location>
        <begin position="151"/>
        <end position="158"/>
    </location>
    <ligand>
        <name>ADP</name>
        <dbReference type="ChEBI" id="CHEBI:456216"/>
    </ligand>
</feature>
<reference key="1">
    <citation type="journal article" date="2010" name="Genome Biol. Evol.">
        <title>Continuing evolution of Burkholderia mallei through genome reduction and large-scale rearrangements.</title>
        <authorList>
            <person name="Losada L."/>
            <person name="Ronning C.M."/>
            <person name="DeShazer D."/>
            <person name="Woods D."/>
            <person name="Fedorova N."/>
            <person name="Kim H.S."/>
            <person name="Shabalina S.A."/>
            <person name="Pearson T.R."/>
            <person name="Brinkac L."/>
            <person name="Tan P."/>
            <person name="Nandi T."/>
            <person name="Crabtree J."/>
            <person name="Badger J."/>
            <person name="Beckstrom-Sternberg S."/>
            <person name="Saqib M."/>
            <person name="Schutzer S.E."/>
            <person name="Keim P."/>
            <person name="Nierman W.C."/>
        </authorList>
    </citation>
    <scope>NUCLEOTIDE SEQUENCE [LARGE SCALE GENOMIC DNA]</scope>
    <source>
        <strain>NCTC 10247</strain>
    </source>
</reference>
<sequence>MLPTVFIVSDGTGITAETFAHSILSQFDQKFRLVRVPFIDSIEKAYDTVRKINDAAQHDGRRPIVFTTLVDGESNEIVKRSNALVLDMFQRFVEPLEQELQLKSSHAMGRVHQNADTEEYKTRIEAINFSLAHDDGQSNRNLADADVILIGVSRSGKTPTSLYLAMQYGVKAANYPLIPEDFERGKLPTPLHPHRDKLFGLSIDPMRLSEIRNERRPGSKYAAPENCRYEINEAEAMMRREGVKWLSSTHKSIEEIATTILQEIKLERQSY</sequence>
<accession>A3MKS6</accession>
<proteinExistence type="inferred from homology"/>
<dbReference type="EC" id="2.7.11.33" evidence="1"/>
<dbReference type="EC" id="2.7.4.28" evidence="1"/>
<dbReference type="EMBL" id="CP000548">
    <property type="protein sequence ID" value="ABO04049.1"/>
    <property type="molecule type" value="Genomic_DNA"/>
</dbReference>
<dbReference type="RefSeq" id="WP_004192738.1">
    <property type="nucleotide sequence ID" value="NZ_CP007802.1"/>
</dbReference>
<dbReference type="SMR" id="A3MKS6"/>
<dbReference type="KEGG" id="bmaz:BM44_1814"/>
<dbReference type="KEGG" id="bmn:BMA10247_1311"/>
<dbReference type="PATRIC" id="fig|320389.8.peg.2029"/>
<dbReference type="GO" id="GO:0043531">
    <property type="term" value="F:ADP binding"/>
    <property type="evidence" value="ECO:0007669"/>
    <property type="project" value="UniProtKB-UniRule"/>
</dbReference>
<dbReference type="GO" id="GO:0005524">
    <property type="term" value="F:ATP binding"/>
    <property type="evidence" value="ECO:0007669"/>
    <property type="project" value="InterPro"/>
</dbReference>
<dbReference type="GO" id="GO:0016776">
    <property type="term" value="F:phosphotransferase activity, phosphate group as acceptor"/>
    <property type="evidence" value="ECO:0007669"/>
    <property type="project" value="UniProtKB-UniRule"/>
</dbReference>
<dbReference type="GO" id="GO:0004674">
    <property type="term" value="F:protein serine/threonine kinase activity"/>
    <property type="evidence" value="ECO:0007669"/>
    <property type="project" value="UniProtKB-UniRule"/>
</dbReference>
<dbReference type="HAMAP" id="MF_01062">
    <property type="entry name" value="PSRP"/>
    <property type="match status" value="1"/>
</dbReference>
<dbReference type="InterPro" id="IPR005177">
    <property type="entry name" value="Kinase-pyrophosphorylase"/>
</dbReference>
<dbReference type="InterPro" id="IPR026530">
    <property type="entry name" value="PSRP"/>
</dbReference>
<dbReference type="NCBIfam" id="NF003742">
    <property type="entry name" value="PRK05339.1"/>
    <property type="match status" value="1"/>
</dbReference>
<dbReference type="PANTHER" id="PTHR31756">
    <property type="entry name" value="PYRUVATE, PHOSPHATE DIKINASE REGULATORY PROTEIN 1, CHLOROPLASTIC"/>
    <property type="match status" value="1"/>
</dbReference>
<dbReference type="PANTHER" id="PTHR31756:SF3">
    <property type="entry name" value="PYRUVATE, PHOSPHATE DIKINASE REGULATORY PROTEIN 1, CHLOROPLASTIC"/>
    <property type="match status" value="1"/>
</dbReference>
<dbReference type="Pfam" id="PF03618">
    <property type="entry name" value="Kinase-PPPase"/>
    <property type="match status" value="1"/>
</dbReference>
<keyword id="KW-0418">Kinase</keyword>
<keyword id="KW-0547">Nucleotide-binding</keyword>
<keyword id="KW-0723">Serine/threonine-protein kinase</keyword>
<keyword id="KW-0808">Transferase</keyword>
<gene>
    <name type="ordered locus">BMA10247_1311</name>
</gene>
<evidence type="ECO:0000255" key="1">
    <source>
        <dbReference type="HAMAP-Rule" id="MF_01062"/>
    </source>
</evidence>
<comment type="function">
    <text evidence="1">Bifunctional serine/threonine kinase and phosphorylase involved in the regulation of the phosphoenolpyruvate synthase (PEPS) by catalyzing its phosphorylation/dephosphorylation.</text>
</comment>
<comment type="catalytic activity">
    <reaction evidence="1">
        <text>[pyruvate, water dikinase] + ADP = [pyruvate, water dikinase]-phosphate + AMP + H(+)</text>
        <dbReference type="Rhea" id="RHEA:46020"/>
        <dbReference type="Rhea" id="RHEA-COMP:11425"/>
        <dbReference type="Rhea" id="RHEA-COMP:11426"/>
        <dbReference type="ChEBI" id="CHEBI:15378"/>
        <dbReference type="ChEBI" id="CHEBI:43176"/>
        <dbReference type="ChEBI" id="CHEBI:68546"/>
        <dbReference type="ChEBI" id="CHEBI:456215"/>
        <dbReference type="ChEBI" id="CHEBI:456216"/>
        <dbReference type="EC" id="2.7.11.33"/>
    </reaction>
</comment>
<comment type="catalytic activity">
    <reaction evidence="1">
        <text>[pyruvate, water dikinase]-phosphate + phosphate + H(+) = [pyruvate, water dikinase] + diphosphate</text>
        <dbReference type="Rhea" id="RHEA:48580"/>
        <dbReference type="Rhea" id="RHEA-COMP:11425"/>
        <dbReference type="Rhea" id="RHEA-COMP:11426"/>
        <dbReference type="ChEBI" id="CHEBI:15378"/>
        <dbReference type="ChEBI" id="CHEBI:33019"/>
        <dbReference type="ChEBI" id="CHEBI:43176"/>
        <dbReference type="ChEBI" id="CHEBI:43474"/>
        <dbReference type="ChEBI" id="CHEBI:68546"/>
        <dbReference type="EC" id="2.7.4.28"/>
    </reaction>
</comment>
<comment type="similarity">
    <text evidence="1">Belongs to the pyruvate, phosphate/water dikinase regulatory protein family. PSRP subfamily.</text>
</comment>
<protein>
    <recommendedName>
        <fullName evidence="1">Putative phosphoenolpyruvate synthase regulatory protein</fullName>
        <shortName evidence="1">PEP synthase regulatory protein</shortName>
        <shortName evidence="1">PSRP</shortName>
        <ecNumber evidence="1">2.7.11.33</ecNumber>
        <ecNumber evidence="1">2.7.4.28</ecNumber>
    </recommendedName>
    <alternativeName>
        <fullName evidence="1">Pyruvate, water dikinase regulatory protein</fullName>
    </alternativeName>
</protein>